<name>WNT4_STRPU</name>
<reference key="1">
    <citation type="journal article" date="1992" name="Proc. Natl. Acad. Sci. U.S.A.">
        <title>Diversification of the Wnt gene family on the ancestral lineage of vertebrates.</title>
        <authorList>
            <person name="Sidow A."/>
        </authorList>
    </citation>
    <scope>NUCLEOTIDE SEQUENCE [GENOMIC DNA]</scope>
</reference>
<proteinExistence type="inferred from homology"/>
<protein>
    <recommendedName>
        <fullName>Protein Wnt-4</fullName>
    </recommendedName>
</protein>
<feature type="chain" id="PRO_0000200627" description="Protein Wnt-4">
    <location>
        <begin position="1" status="less than"/>
        <end position="133" status="greater than"/>
    </location>
</feature>
<feature type="lipid moiety-binding region" description="O-palmitoleoyl serine; by PORCN" evidence="4">
    <location>
        <position position="1"/>
    </location>
</feature>
<feature type="glycosylation site" description="N-linked (GlcNAc...) asparagine" evidence="5">
    <location>
        <position position="100"/>
    </location>
</feature>
<feature type="disulfide bond" evidence="3">
    <location>
        <begin position="69"/>
        <end position="114"/>
    </location>
</feature>
<feature type="disulfide bond" evidence="3">
    <location>
        <begin position="99"/>
        <end position="109"/>
    </location>
</feature>
<feature type="non-terminal residue">
    <location>
        <position position="1"/>
    </location>
</feature>
<feature type="non-terminal residue">
    <location>
        <position position="133"/>
    </location>
</feature>
<sequence length="133" mass="14702">SGSCEMKTCWKSMPTFGDIGQVLKEKFDGATEVQSLKIGSRQQLVPTQRDFKPHTSSDLVYLVPSPDFCEEDLKVSIPVGLTFSHPPNQGSLGTHGRRCNKTSKAIDGCELMCCGRGFNTHIEEVIERCSCKF</sequence>
<organism>
    <name type="scientific">Strongylocentrotus purpuratus</name>
    <name type="common">Purple sea urchin</name>
    <dbReference type="NCBI Taxonomy" id="7668"/>
    <lineage>
        <taxon>Eukaryota</taxon>
        <taxon>Metazoa</taxon>
        <taxon>Echinodermata</taxon>
        <taxon>Eleutherozoa</taxon>
        <taxon>Echinozoa</taxon>
        <taxon>Echinoidea</taxon>
        <taxon>Euechinoidea</taxon>
        <taxon>Echinacea</taxon>
        <taxon>Camarodonta</taxon>
        <taxon>Echinidea</taxon>
        <taxon>Strongylocentrotidae</taxon>
        <taxon>Strongylocentrotus</taxon>
    </lineage>
</organism>
<keyword id="KW-0217">Developmental protein</keyword>
<keyword id="KW-1015">Disulfide bond</keyword>
<keyword id="KW-0272">Extracellular matrix</keyword>
<keyword id="KW-0325">Glycoprotein</keyword>
<keyword id="KW-0449">Lipoprotein</keyword>
<keyword id="KW-1185">Reference proteome</keyword>
<keyword id="KW-0964">Secreted</keyword>
<keyword id="KW-0879">Wnt signaling pathway</keyword>
<gene>
    <name type="primary">WNT-4</name>
</gene>
<accession>P28096</accession>
<comment type="function">
    <text evidence="1 6">Ligand for members of the frizzled family of seven transmembrane receptors (Probable). Plays an important role in embryonic development (By similarity).</text>
</comment>
<comment type="subcellular location">
    <subcellularLocation>
        <location>Secreted</location>
        <location>Extracellular space</location>
        <location>Extracellular matrix</location>
    </subcellularLocation>
</comment>
<comment type="PTM">
    <text evidence="2 4">Palmitoleoylation is required for efficient binding to frizzled receptors. Depalmitoleoylation leads to Wnt signaling pathway inhibition.</text>
</comment>
<comment type="similarity">
    <text evidence="6">Belongs to the Wnt family.</text>
</comment>
<evidence type="ECO:0000250" key="1">
    <source>
        <dbReference type="UniProtKB" id="P22724"/>
    </source>
</evidence>
<evidence type="ECO:0000250" key="2">
    <source>
        <dbReference type="UniProtKB" id="P27467"/>
    </source>
</evidence>
<evidence type="ECO:0000250" key="3">
    <source>
        <dbReference type="UniProtKB" id="P28026"/>
    </source>
</evidence>
<evidence type="ECO:0000250" key="4">
    <source>
        <dbReference type="UniProtKB" id="P56704"/>
    </source>
</evidence>
<evidence type="ECO:0000255" key="5"/>
<evidence type="ECO:0000305" key="6"/>
<dbReference type="EMBL" id="M95841">
    <property type="protein sequence ID" value="AAA30085.1"/>
    <property type="molecule type" value="Genomic_DNA"/>
</dbReference>
<dbReference type="EMBL" id="M95840">
    <property type="protein sequence ID" value="AAA30085.1"/>
    <property type="status" value="JOINED"/>
    <property type="molecule type" value="Genomic_DNA"/>
</dbReference>
<dbReference type="SMR" id="P28096"/>
<dbReference type="STRING" id="7668.P28096"/>
<dbReference type="GlyCosmos" id="P28096">
    <property type="glycosylation" value="1 site, No reported glycans"/>
</dbReference>
<dbReference type="InParanoid" id="P28096"/>
<dbReference type="Proteomes" id="UP000007110">
    <property type="component" value="Unassembled WGS sequence"/>
</dbReference>
<dbReference type="GO" id="GO:0005576">
    <property type="term" value="C:extracellular region"/>
    <property type="evidence" value="ECO:0007669"/>
    <property type="project" value="UniProtKB-KW"/>
</dbReference>
<dbReference type="GO" id="GO:0005102">
    <property type="term" value="F:signaling receptor binding"/>
    <property type="evidence" value="ECO:0007669"/>
    <property type="project" value="InterPro"/>
</dbReference>
<dbReference type="GO" id="GO:0016055">
    <property type="term" value="P:Wnt signaling pathway"/>
    <property type="evidence" value="ECO:0007669"/>
    <property type="project" value="UniProtKB-KW"/>
</dbReference>
<dbReference type="FunFam" id="3.30.2460.20:FF:000008">
    <property type="entry name" value="Protein Wnt-4"/>
    <property type="match status" value="1"/>
</dbReference>
<dbReference type="Gene3D" id="3.30.2460.20">
    <property type="match status" value="1"/>
</dbReference>
<dbReference type="InterPro" id="IPR005817">
    <property type="entry name" value="Wnt"/>
</dbReference>
<dbReference type="InterPro" id="IPR043158">
    <property type="entry name" value="Wnt_C"/>
</dbReference>
<dbReference type="PANTHER" id="PTHR12027:SF101">
    <property type="entry name" value="PROTEIN WNT-4"/>
    <property type="match status" value="1"/>
</dbReference>
<dbReference type="PANTHER" id="PTHR12027">
    <property type="entry name" value="WNT RELATED"/>
    <property type="match status" value="1"/>
</dbReference>
<dbReference type="Pfam" id="PF00110">
    <property type="entry name" value="wnt"/>
    <property type="match status" value="1"/>
</dbReference>
<dbReference type="SMART" id="SM00097">
    <property type="entry name" value="WNT1"/>
    <property type="match status" value="1"/>
</dbReference>